<comment type="function">
    <text evidence="1">Catalyzes the conversion of 3-deoxy-D-arabino-heptulosonate 7-phosphate (DAHP) to dehydroquinate (DHQ).</text>
</comment>
<comment type="catalytic activity">
    <reaction evidence="1">
        <text>7-phospho-2-dehydro-3-deoxy-D-arabino-heptonate = 3-dehydroquinate + phosphate</text>
        <dbReference type="Rhea" id="RHEA:21968"/>
        <dbReference type="ChEBI" id="CHEBI:32364"/>
        <dbReference type="ChEBI" id="CHEBI:43474"/>
        <dbReference type="ChEBI" id="CHEBI:58394"/>
        <dbReference type="EC" id="4.2.3.4"/>
    </reaction>
</comment>
<comment type="cofactor">
    <cofactor evidence="1">
        <name>Co(2+)</name>
        <dbReference type="ChEBI" id="CHEBI:48828"/>
    </cofactor>
    <cofactor evidence="1">
        <name>Zn(2+)</name>
        <dbReference type="ChEBI" id="CHEBI:29105"/>
    </cofactor>
    <text evidence="1">Binds 1 divalent metal cation per subunit. Can use either Co(2+) or Zn(2+).</text>
</comment>
<comment type="cofactor">
    <cofactor evidence="1">
        <name>NAD(+)</name>
        <dbReference type="ChEBI" id="CHEBI:57540"/>
    </cofactor>
</comment>
<comment type="pathway">
    <text evidence="1">Metabolic intermediate biosynthesis; chorismate biosynthesis; chorismate from D-erythrose 4-phosphate and phosphoenolpyruvate: step 2/7.</text>
</comment>
<comment type="subcellular location">
    <subcellularLocation>
        <location evidence="1">Cytoplasm</location>
    </subcellularLocation>
</comment>
<comment type="similarity">
    <text evidence="1">Belongs to the sugar phosphate cyclases superfamily. Dehydroquinate synthase family.</text>
</comment>
<name>AROB_SHESW</name>
<dbReference type="EC" id="4.2.3.4" evidence="1"/>
<dbReference type="EMBL" id="CP000503">
    <property type="protein sequence ID" value="ABM26651.1"/>
    <property type="molecule type" value="Genomic_DNA"/>
</dbReference>
<dbReference type="RefSeq" id="WP_011791076.1">
    <property type="nucleotide sequence ID" value="NC_008750.1"/>
</dbReference>
<dbReference type="SMR" id="A1RPQ6"/>
<dbReference type="KEGG" id="shw:Sputw3181_3846"/>
<dbReference type="HOGENOM" id="CLU_001201_0_2_6"/>
<dbReference type="UniPathway" id="UPA00053">
    <property type="reaction ID" value="UER00085"/>
</dbReference>
<dbReference type="Proteomes" id="UP000002597">
    <property type="component" value="Chromosome"/>
</dbReference>
<dbReference type="GO" id="GO:0005737">
    <property type="term" value="C:cytoplasm"/>
    <property type="evidence" value="ECO:0007669"/>
    <property type="project" value="UniProtKB-SubCell"/>
</dbReference>
<dbReference type="GO" id="GO:0003856">
    <property type="term" value="F:3-dehydroquinate synthase activity"/>
    <property type="evidence" value="ECO:0007669"/>
    <property type="project" value="UniProtKB-UniRule"/>
</dbReference>
<dbReference type="GO" id="GO:0046872">
    <property type="term" value="F:metal ion binding"/>
    <property type="evidence" value="ECO:0007669"/>
    <property type="project" value="UniProtKB-KW"/>
</dbReference>
<dbReference type="GO" id="GO:0000166">
    <property type="term" value="F:nucleotide binding"/>
    <property type="evidence" value="ECO:0007669"/>
    <property type="project" value="UniProtKB-KW"/>
</dbReference>
<dbReference type="GO" id="GO:0008652">
    <property type="term" value="P:amino acid biosynthetic process"/>
    <property type="evidence" value="ECO:0007669"/>
    <property type="project" value="UniProtKB-KW"/>
</dbReference>
<dbReference type="GO" id="GO:0009073">
    <property type="term" value="P:aromatic amino acid family biosynthetic process"/>
    <property type="evidence" value="ECO:0007669"/>
    <property type="project" value="UniProtKB-KW"/>
</dbReference>
<dbReference type="GO" id="GO:0009423">
    <property type="term" value="P:chorismate biosynthetic process"/>
    <property type="evidence" value="ECO:0007669"/>
    <property type="project" value="UniProtKB-UniRule"/>
</dbReference>
<dbReference type="CDD" id="cd08195">
    <property type="entry name" value="DHQS"/>
    <property type="match status" value="1"/>
</dbReference>
<dbReference type="FunFam" id="1.20.1090.10:FF:000002">
    <property type="entry name" value="3-dehydroquinate synthase"/>
    <property type="match status" value="1"/>
</dbReference>
<dbReference type="FunFam" id="3.40.50.1970:FF:000001">
    <property type="entry name" value="3-dehydroquinate synthase"/>
    <property type="match status" value="1"/>
</dbReference>
<dbReference type="Gene3D" id="3.40.50.1970">
    <property type="match status" value="1"/>
</dbReference>
<dbReference type="Gene3D" id="1.20.1090.10">
    <property type="entry name" value="Dehydroquinate synthase-like - alpha domain"/>
    <property type="match status" value="1"/>
</dbReference>
<dbReference type="HAMAP" id="MF_00110">
    <property type="entry name" value="DHQ_synthase"/>
    <property type="match status" value="1"/>
</dbReference>
<dbReference type="InterPro" id="IPR050071">
    <property type="entry name" value="Dehydroquinate_synthase"/>
</dbReference>
<dbReference type="InterPro" id="IPR016037">
    <property type="entry name" value="DHQ_synth_AroB"/>
</dbReference>
<dbReference type="InterPro" id="IPR030963">
    <property type="entry name" value="DHQ_synth_fam"/>
</dbReference>
<dbReference type="InterPro" id="IPR030960">
    <property type="entry name" value="DHQS/DOIS_N"/>
</dbReference>
<dbReference type="InterPro" id="IPR056179">
    <property type="entry name" value="DHQS_C"/>
</dbReference>
<dbReference type="NCBIfam" id="TIGR01357">
    <property type="entry name" value="aroB"/>
    <property type="match status" value="1"/>
</dbReference>
<dbReference type="PANTHER" id="PTHR43622">
    <property type="entry name" value="3-DEHYDROQUINATE SYNTHASE"/>
    <property type="match status" value="1"/>
</dbReference>
<dbReference type="PANTHER" id="PTHR43622:SF7">
    <property type="entry name" value="3-DEHYDROQUINATE SYNTHASE, CHLOROPLASTIC"/>
    <property type="match status" value="1"/>
</dbReference>
<dbReference type="Pfam" id="PF01761">
    <property type="entry name" value="DHQ_synthase"/>
    <property type="match status" value="1"/>
</dbReference>
<dbReference type="Pfam" id="PF24621">
    <property type="entry name" value="DHQS_C"/>
    <property type="match status" value="1"/>
</dbReference>
<dbReference type="PIRSF" id="PIRSF001455">
    <property type="entry name" value="DHQ_synth"/>
    <property type="match status" value="1"/>
</dbReference>
<dbReference type="SUPFAM" id="SSF56796">
    <property type="entry name" value="Dehydroquinate synthase-like"/>
    <property type="match status" value="1"/>
</dbReference>
<protein>
    <recommendedName>
        <fullName evidence="1">3-dehydroquinate synthase</fullName>
        <shortName evidence="1">DHQS</shortName>
        <ecNumber evidence="1">4.2.3.4</ecNumber>
    </recommendedName>
</protein>
<proteinExistence type="inferred from homology"/>
<organism>
    <name type="scientific">Shewanella sp. (strain W3-18-1)</name>
    <dbReference type="NCBI Taxonomy" id="351745"/>
    <lineage>
        <taxon>Bacteria</taxon>
        <taxon>Pseudomonadati</taxon>
        <taxon>Pseudomonadota</taxon>
        <taxon>Gammaproteobacteria</taxon>
        <taxon>Alteromonadales</taxon>
        <taxon>Shewanellaceae</taxon>
        <taxon>Shewanella</taxon>
    </lineage>
</organism>
<sequence length="359" mass="39446">MMKQIQVDLGERSYPIYIGQNLMNDSEALSRYLLKKRILIVTNETVAPLYLNQIQEVMVSFGEVESVILPDGEQFKDLAHLDAIFTALLQRNYGRDSVLVALGGGVIGDMTGFAAACYQRGIDFIQIPTTLLSQVDSSVGGKTAVNHPLGKNMIGAFYQPQLVLIDTQCLHTLPAREFAAGMAEVIKYGIMWDGKFFQWLENNVQALKRLETEALVYAISRCCEIKADVVSQDETEQGVRALLNLGHTFGHAIEAEMGYGNWLHGEAVAAGTVLAAQTARSLGLIDESIVCRIVQLLQAFDLPVSAPESMDFDSFIQHMRRDKKVLGGQIRLVLPTGIGQADVFSQVTESTLEQVICCA</sequence>
<gene>
    <name evidence="1" type="primary">aroB</name>
    <name type="ordered locus">Sputw3181_3846</name>
</gene>
<accession>A1RPQ6</accession>
<keyword id="KW-0028">Amino-acid biosynthesis</keyword>
<keyword id="KW-0057">Aromatic amino acid biosynthesis</keyword>
<keyword id="KW-0170">Cobalt</keyword>
<keyword id="KW-0963">Cytoplasm</keyword>
<keyword id="KW-0456">Lyase</keyword>
<keyword id="KW-0479">Metal-binding</keyword>
<keyword id="KW-0520">NAD</keyword>
<keyword id="KW-0547">Nucleotide-binding</keyword>
<keyword id="KW-0862">Zinc</keyword>
<feature type="chain" id="PRO_1000094619" description="3-dehydroquinate synthase">
    <location>
        <begin position="1"/>
        <end position="359"/>
    </location>
</feature>
<feature type="binding site" evidence="1">
    <location>
        <begin position="71"/>
        <end position="76"/>
    </location>
    <ligand>
        <name>NAD(+)</name>
        <dbReference type="ChEBI" id="CHEBI:57540"/>
    </ligand>
</feature>
<feature type="binding site" evidence="1">
    <location>
        <begin position="105"/>
        <end position="109"/>
    </location>
    <ligand>
        <name>NAD(+)</name>
        <dbReference type="ChEBI" id="CHEBI:57540"/>
    </ligand>
</feature>
<feature type="binding site" evidence="1">
    <location>
        <begin position="129"/>
        <end position="130"/>
    </location>
    <ligand>
        <name>NAD(+)</name>
        <dbReference type="ChEBI" id="CHEBI:57540"/>
    </ligand>
</feature>
<feature type="binding site" evidence="1">
    <location>
        <position position="142"/>
    </location>
    <ligand>
        <name>NAD(+)</name>
        <dbReference type="ChEBI" id="CHEBI:57540"/>
    </ligand>
</feature>
<feature type="binding site" evidence="1">
    <location>
        <position position="151"/>
    </location>
    <ligand>
        <name>NAD(+)</name>
        <dbReference type="ChEBI" id="CHEBI:57540"/>
    </ligand>
</feature>
<feature type="binding site" evidence="1">
    <location>
        <begin position="169"/>
        <end position="172"/>
    </location>
    <ligand>
        <name>NAD(+)</name>
        <dbReference type="ChEBI" id="CHEBI:57540"/>
    </ligand>
</feature>
<feature type="binding site" evidence="1">
    <location>
        <position position="184"/>
    </location>
    <ligand>
        <name>Zn(2+)</name>
        <dbReference type="ChEBI" id="CHEBI:29105"/>
    </ligand>
</feature>
<feature type="binding site" evidence="1">
    <location>
        <position position="247"/>
    </location>
    <ligand>
        <name>Zn(2+)</name>
        <dbReference type="ChEBI" id="CHEBI:29105"/>
    </ligand>
</feature>
<feature type="binding site" evidence="1">
    <location>
        <position position="264"/>
    </location>
    <ligand>
        <name>Zn(2+)</name>
        <dbReference type="ChEBI" id="CHEBI:29105"/>
    </ligand>
</feature>
<reference key="1">
    <citation type="submission" date="2006-12" db="EMBL/GenBank/DDBJ databases">
        <title>Complete sequence of Shewanella sp. W3-18-1.</title>
        <authorList>
            <consortium name="US DOE Joint Genome Institute"/>
            <person name="Copeland A."/>
            <person name="Lucas S."/>
            <person name="Lapidus A."/>
            <person name="Barry K."/>
            <person name="Detter J.C."/>
            <person name="Glavina del Rio T."/>
            <person name="Hammon N."/>
            <person name="Israni S."/>
            <person name="Dalin E."/>
            <person name="Tice H."/>
            <person name="Pitluck S."/>
            <person name="Chain P."/>
            <person name="Malfatti S."/>
            <person name="Shin M."/>
            <person name="Vergez L."/>
            <person name="Schmutz J."/>
            <person name="Larimer F."/>
            <person name="Land M."/>
            <person name="Hauser L."/>
            <person name="Kyrpides N."/>
            <person name="Lykidis A."/>
            <person name="Tiedje J."/>
            <person name="Richardson P."/>
        </authorList>
    </citation>
    <scope>NUCLEOTIDE SEQUENCE [LARGE SCALE GENOMIC DNA]</scope>
    <source>
        <strain>W3-18-1</strain>
    </source>
</reference>
<evidence type="ECO:0000255" key="1">
    <source>
        <dbReference type="HAMAP-Rule" id="MF_00110"/>
    </source>
</evidence>